<sequence>MFTINAEVRKEQGKGASRRLRAANKFPAIIYGGSEAPIAIELDHDQVMNMQAKAEFYSEVLTLVVDGKEVKVKAQAVQRHAYKPKLTHIDFVRA</sequence>
<dbReference type="EMBL" id="CP001144">
    <property type="protein sequence ID" value="ACH76918.1"/>
    <property type="molecule type" value="Genomic_DNA"/>
</dbReference>
<dbReference type="RefSeq" id="WP_000494192.1">
    <property type="nucleotide sequence ID" value="NC_011205.1"/>
</dbReference>
<dbReference type="SMR" id="B5FNN0"/>
<dbReference type="KEGG" id="sed:SeD_A2575"/>
<dbReference type="HOGENOM" id="CLU_137946_0_0_6"/>
<dbReference type="Proteomes" id="UP000008322">
    <property type="component" value="Chromosome"/>
</dbReference>
<dbReference type="GO" id="GO:0022625">
    <property type="term" value="C:cytosolic large ribosomal subunit"/>
    <property type="evidence" value="ECO:0007669"/>
    <property type="project" value="TreeGrafter"/>
</dbReference>
<dbReference type="GO" id="GO:0008097">
    <property type="term" value="F:5S rRNA binding"/>
    <property type="evidence" value="ECO:0007669"/>
    <property type="project" value="InterPro"/>
</dbReference>
<dbReference type="GO" id="GO:0003735">
    <property type="term" value="F:structural constituent of ribosome"/>
    <property type="evidence" value="ECO:0007669"/>
    <property type="project" value="InterPro"/>
</dbReference>
<dbReference type="GO" id="GO:0006412">
    <property type="term" value="P:translation"/>
    <property type="evidence" value="ECO:0007669"/>
    <property type="project" value="UniProtKB-UniRule"/>
</dbReference>
<dbReference type="CDD" id="cd00495">
    <property type="entry name" value="Ribosomal_L25_TL5_CTC"/>
    <property type="match status" value="1"/>
</dbReference>
<dbReference type="FunFam" id="2.40.240.10:FF:000002">
    <property type="entry name" value="50S ribosomal protein L25"/>
    <property type="match status" value="1"/>
</dbReference>
<dbReference type="Gene3D" id="2.40.240.10">
    <property type="entry name" value="Ribosomal Protein L25, Chain P"/>
    <property type="match status" value="1"/>
</dbReference>
<dbReference type="HAMAP" id="MF_01336">
    <property type="entry name" value="Ribosomal_bL25"/>
    <property type="match status" value="1"/>
</dbReference>
<dbReference type="InterPro" id="IPR020056">
    <property type="entry name" value="Rbsml_bL25/Gln-tRNA_synth_N"/>
</dbReference>
<dbReference type="InterPro" id="IPR011035">
    <property type="entry name" value="Ribosomal_bL25/Gln-tRNA_synth"/>
</dbReference>
<dbReference type="InterPro" id="IPR020055">
    <property type="entry name" value="Ribosomal_bL25_short"/>
</dbReference>
<dbReference type="InterPro" id="IPR029751">
    <property type="entry name" value="Ribosomal_L25_dom"/>
</dbReference>
<dbReference type="InterPro" id="IPR020930">
    <property type="entry name" value="Ribosomal_uL5_bac-type"/>
</dbReference>
<dbReference type="NCBIfam" id="NF004612">
    <property type="entry name" value="PRK05943.1"/>
    <property type="match status" value="1"/>
</dbReference>
<dbReference type="PANTHER" id="PTHR33284">
    <property type="entry name" value="RIBOSOMAL PROTEIN L25/GLN-TRNA SYNTHETASE, ANTI-CODON-BINDING DOMAIN-CONTAINING PROTEIN"/>
    <property type="match status" value="1"/>
</dbReference>
<dbReference type="PANTHER" id="PTHR33284:SF1">
    <property type="entry name" value="RIBOSOMAL PROTEIN L25_GLN-TRNA SYNTHETASE, ANTI-CODON-BINDING DOMAIN-CONTAINING PROTEIN"/>
    <property type="match status" value="1"/>
</dbReference>
<dbReference type="Pfam" id="PF01386">
    <property type="entry name" value="Ribosomal_L25p"/>
    <property type="match status" value="1"/>
</dbReference>
<dbReference type="SUPFAM" id="SSF50715">
    <property type="entry name" value="Ribosomal protein L25-like"/>
    <property type="match status" value="1"/>
</dbReference>
<reference key="1">
    <citation type="journal article" date="2011" name="J. Bacteriol.">
        <title>Comparative genomics of 28 Salmonella enterica isolates: evidence for CRISPR-mediated adaptive sublineage evolution.</title>
        <authorList>
            <person name="Fricke W.F."/>
            <person name="Mammel M.K."/>
            <person name="McDermott P.F."/>
            <person name="Tartera C."/>
            <person name="White D.G."/>
            <person name="Leclerc J.E."/>
            <person name="Ravel J."/>
            <person name="Cebula T.A."/>
        </authorList>
    </citation>
    <scope>NUCLEOTIDE SEQUENCE [LARGE SCALE GENOMIC DNA]</scope>
    <source>
        <strain>CT_02021853</strain>
    </source>
</reference>
<name>RL25_SALDC</name>
<organism>
    <name type="scientific">Salmonella dublin (strain CT_02021853)</name>
    <dbReference type="NCBI Taxonomy" id="439851"/>
    <lineage>
        <taxon>Bacteria</taxon>
        <taxon>Pseudomonadati</taxon>
        <taxon>Pseudomonadota</taxon>
        <taxon>Gammaproteobacteria</taxon>
        <taxon>Enterobacterales</taxon>
        <taxon>Enterobacteriaceae</taxon>
        <taxon>Salmonella</taxon>
    </lineage>
</organism>
<feature type="chain" id="PRO_1000142590" description="Large ribosomal subunit protein bL25">
    <location>
        <begin position="1"/>
        <end position="94"/>
    </location>
</feature>
<accession>B5FNN0</accession>
<keyword id="KW-0687">Ribonucleoprotein</keyword>
<keyword id="KW-0689">Ribosomal protein</keyword>
<keyword id="KW-0694">RNA-binding</keyword>
<keyword id="KW-0699">rRNA-binding</keyword>
<protein>
    <recommendedName>
        <fullName evidence="1">Large ribosomal subunit protein bL25</fullName>
    </recommendedName>
    <alternativeName>
        <fullName evidence="2">50S ribosomal protein L25</fullName>
    </alternativeName>
</protein>
<gene>
    <name evidence="1" type="primary">rplY</name>
    <name type="ordered locus">SeD_A2575</name>
</gene>
<evidence type="ECO:0000255" key="1">
    <source>
        <dbReference type="HAMAP-Rule" id="MF_01336"/>
    </source>
</evidence>
<evidence type="ECO:0000305" key="2"/>
<proteinExistence type="inferred from homology"/>
<comment type="function">
    <text evidence="1">This is one of the proteins that binds to the 5S RNA in the ribosome where it forms part of the central protuberance.</text>
</comment>
<comment type="subunit">
    <text evidence="1">Part of the 50S ribosomal subunit; part of the 5S rRNA/L5/L18/L25 subcomplex. Contacts the 5S rRNA. Binds to the 5S rRNA independently of L5 and L18.</text>
</comment>
<comment type="similarity">
    <text evidence="1">Belongs to the bacterial ribosomal protein bL25 family.</text>
</comment>